<sequence length="254" mass="27886">MSSQPPPLPWLDPNQDFPPTSQAWDENSPAPGLLAAGGVLDVETLRRAYSQGIFPWYSEGQPTLWWSPNPRMVLQVANFRLRPSFKKKIRQFCQTPGCEIRIDSAFEQVIEACASSARIGQSGTWIVPDMRAAYGELHRVGLAHSVETWVNGELAGGLYCVALGKAVFGESMFSRVSDASKIALAALIGFCRHHGVKQIDCQQNTPHLASLGAGEISRDLFLKGLAAGLAEAGPAWEFDRRFWQQLLTPESMST</sequence>
<protein>
    <recommendedName>
        <fullName evidence="1">Leucyl/phenylalanyl-tRNA--protein transferase</fullName>
        <ecNumber evidence="1">2.3.2.6</ecNumber>
    </recommendedName>
    <alternativeName>
        <fullName evidence="1">L/F-transferase</fullName>
    </alternativeName>
    <alternativeName>
        <fullName evidence="1">Leucyltransferase</fullName>
    </alternativeName>
    <alternativeName>
        <fullName evidence="1">Phenyalanyltransferase</fullName>
    </alternativeName>
</protein>
<accession>Q21VY7</accession>
<organism>
    <name type="scientific">Albidiferax ferrireducens (strain ATCC BAA-621 / DSM 15236 / T118)</name>
    <name type="common">Rhodoferax ferrireducens</name>
    <dbReference type="NCBI Taxonomy" id="338969"/>
    <lineage>
        <taxon>Bacteria</taxon>
        <taxon>Pseudomonadati</taxon>
        <taxon>Pseudomonadota</taxon>
        <taxon>Betaproteobacteria</taxon>
        <taxon>Burkholderiales</taxon>
        <taxon>Comamonadaceae</taxon>
        <taxon>Rhodoferax</taxon>
    </lineage>
</organism>
<gene>
    <name evidence="1" type="primary">aat</name>
    <name type="ordered locus">Rfer_2349</name>
</gene>
<feature type="chain" id="PRO_0000258088" description="Leucyl/phenylalanyl-tRNA--protein transferase">
    <location>
        <begin position="1"/>
        <end position="254"/>
    </location>
</feature>
<feature type="region of interest" description="Disordered" evidence="2">
    <location>
        <begin position="1"/>
        <end position="28"/>
    </location>
</feature>
<feature type="compositionally biased region" description="Pro residues" evidence="2">
    <location>
        <begin position="1"/>
        <end position="10"/>
    </location>
</feature>
<name>LFTR_ALBFT</name>
<evidence type="ECO:0000255" key="1">
    <source>
        <dbReference type="HAMAP-Rule" id="MF_00688"/>
    </source>
</evidence>
<evidence type="ECO:0000256" key="2">
    <source>
        <dbReference type="SAM" id="MobiDB-lite"/>
    </source>
</evidence>
<comment type="function">
    <text evidence="1">Functions in the N-end rule pathway of protein degradation where it conjugates Leu, Phe and, less efficiently, Met from aminoacyl-tRNAs to the N-termini of proteins containing an N-terminal arginine or lysine.</text>
</comment>
<comment type="catalytic activity">
    <reaction evidence="1">
        <text>N-terminal L-lysyl-[protein] + L-leucyl-tRNA(Leu) = N-terminal L-leucyl-L-lysyl-[protein] + tRNA(Leu) + H(+)</text>
        <dbReference type="Rhea" id="RHEA:12340"/>
        <dbReference type="Rhea" id="RHEA-COMP:9613"/>
        <dbReference type="Rhea" id="RHEA-COMP:9622"/>
        <dbReference type="Rhea" id="RHEA-COMP:12670"/>
        <dbReference type="Rhea" id="RHEA-COMP:12671"/>
        <dbReference type="ChEBI" id="CHEBI:15378"/>
        <dbReference type="ChEBI" id="CHEBI:65249"/>
        <dbReference type="ChEBI" id="CHEBI:78442"/>
        <dbReference type="ChEBI" id="CHEBI:78494"/>
        <dbReference type="ChEBI" id="CHEBI:133043"/>
        <dbReference type="EC" id="2.3.2.6"/>
    </reaction>
</comment>
<comment type="catalytic activity">
    <reaction evidence="1">
        <text>N-terminal L-arginyl-[protein] + L-leucyl-tRNA(Leu) = N-terminal L-leucyl-L-arginyl-[protein] + tRNA(Leu) + H(+)</text>
        <dbReference type="Rhea" id="RHEA:50416"/>
        <dbReference type="Rhea" id="RHEA-COMP:9613"/>
        <dbReference type="Rhea" id="RHEA-COMP:9622"/>
        <dbReference type="Rhea" id="RHEA-COMP:12672"/>
        <dbReference type="Rhea" id="RHEA-COMP:12673"/>
        <dbReference type="ChEBI" id="CHEBI:15378"/>
        <dbReference type="ChEBI" id="CHEBI:64719"/>
        <dbReference type="ChEBI" id="CHEBI:78442"/>
        <dbReference type="ChEBI" id="CHEBI:78494"/>
        <dbReference type="ChEBI" id="CHEBI:133044"/>
        <dbReference type="EC" id="2.3.2.6"/>
    </reaction>
</comment>
<comment type="catalytic activity">
    <reaction evidence="1">
        <text>L-phenylalanyl-tRNA(Phe) + an N-terminal L-alpha-aminoacyl-[protein] = an N-terminal L-phenylalanyl-L-alpha-aminoacyl-[protein] + tRNA(Phe)</text>
        <dbReference type="Rhea" id="RHEA:43632"/>
        <dbReference type="Rhea" id="RHEA-COMP:9668"/>
        <dbReference type="Rhea" id="RHEA-COMP:9699"/>
        <dbReference type="Rhea" id="RHEA-COMP:10636"/>
        <dbReference type="Rhea" id="RHEA-COMP:10637"/>
        <dbReference type="ChEBI" id="CHEBI:78442"/>
        <dbReference type="ChEBI" id="CHEBI:78531"/>
        <dbReference type="ChEBI" id="CHEBI:78597"/>
        <dbReference type="ChEBI" id="CHEBI:83561"/>
        <dbReference type="EC" id="2.3.2.6"/>
    </reaction>
</comment>
<comment type="subcellular location">
    <subcellularLocation>
        <location evidence="1">Cytoplasm</location>
    </subcellularLocation>
</comment>
<comment type="similarity">
    <text evidence="1">Belongs to the L/F-transferase family.</text>
</comment>
<dbReference type="EC" id="2.3.2.6" evidence="1"/>
<dbReference type="EMBL" id="CP000267">
    <property type="protein sequence ID" value="ABD70066.1"/>
    <property type="molecule type" value="Genomic_DNA"/>
</dbReference>
<dbReference type="RefSeq" id="WP_011464634.1">
    <property type="nucleotide sequence ID" value="NC_007908.1"/>
</dbReference>
<dbReference type="SMR" id="Q21VY7"/>
<dbReference type="STRING" id="338969.Rfer_2349"/>
<dbReference type="KEGG" id="rfr:Rfer_2349"/>
<dbReference type="eggNOG" id="COG2360">
    <property type="taxonomic scope" value="Bacteria"/>
</dbReference>
<dbReference type="HOGENOM" id="CLU_075045_0_0_4"/>
<dbReference type="OrthoDB" id="9790282at2"/>
<dbReference type="Proteomes" id="UP000008332">
    <property type="component" value="Chromosome"/>
</dbReference>
<dbReference type="GO" id="GO:0005737">
    <property type="term" value="C:cytoplasm"/>
    <property type="evidence" value="ECO:0007669"/>
    <property type="project" value="UniProtKB-SubCell"/>
</dbReference>
<dbReference type="GO" id="GO:0008914">
    <property type="term" value="F:leucyl-tRNA--protein transferase activity"/>
    <property type="evidence" value="ECO:0007669"/>
    <property type="project" value="UniProtKB-UniRule"/>
</dbReference>
<dbReference type="GO" id="GO:0030163">
    <property type="term" value="P:protein catabolic process"/>
    <property type="evidence" value="ECO:0007669"/>
    <property type="project" value="UniProtKB-UniRule"/>
</dbReference>
<dbReference type="Gene3D" id="3.40.630.70">
    <property type="entry name" value="Leucyl/phenylalanyl-tRNA-protein transferase, C-terminal domain"/>
    <property type="match status" value="1"/>
</dbReference>
<dbReference type="Gene3D" id="3.30.70.3550">
    <property type="entry name" value="Leucyl/phenylalanyl-tRNA-protein transferase, N-terminal domain"/>
    <property type="match status" value="1"/>
</dbReference>
<dbReference type="HAMAP" id="MF_00688">
    <property type="entry name" value="Leu_Phe_trans"/>
    <property type="match status" value="1"/>
</dbReference>
<dbReference type="InterPro" id="IPR016181">
    <property type="entry name" value="Acyl_CoA_acyltransferase"/>
</dbReference>
<dbReference type="InterPro" id="IPR004616">
    <property type="entry name" value="Leu/Phe-tRNA_Trfase"/>
</dbReference>
<dbReference type="InterPro" id="IPR042203">
    <property type="entry name" value="Leu/Phe-tRNA_Trfase_C"/>
</dbReference>
<dbReference type="InterPro" id="IPR042221">
    <property type="entry name" value="Leu/Phe-tRNA_Trfase_N"/>
</dbReference>
<dbReference type="NCBIfam" id="TIGR00667">
    <property type="entry name" value="aat"/>
    <property type="match status" value="1"/>
</dbReference>
<dbReference type="PANTHER" id="PTHR30098">
    <property type="entry name" value="LEUCYL/PHENYLALANYL-TRNA--PROTEIN TRANSFERASE"/>
    <property type="match status" value="1"/>
</dbReference>
<dbReference type="PANTHER" id="PTHR30098:SF2">
    <property type="entry name" value="LEUCYL_PHENYLALANYL-TRNA--PROTEIN TRANSFERASE"/>
    <property type="match status" value="1"/>
</dbReference>
<dbReference type="Pfam" id="PF03588">
    <property type="entry name" value="Leu_Phe_trans"/>
    <property type="match status" value="1"/>
</dbReference>
<dbReference type="SUPFAM" id="SSF55729">
    <property type="entry name" value="Acyl-CoA N-acyltransferases (Nat)"/>
    <property type="match status" value="1"/>
</dbReference>
<keyword id="KW-0012">Acyltransferase</keyword>
<keyword id="KW-0963">Cytoplasm</keyword>
<keyword id="KW-1185">Reference proteome</keyword>
<keyword id="KW-0808">Transferase</keyword>
<reference key="1">
    <citation type="submission" date="2006-02" db="EMBL/GenBank/DDBJ databases">
        <title>Complete sequence of chromosome of Rhodoferax ferrireducens DSM 15236.</title>
        <authorList>
            <person name="Copeland A."/>
            <person name="Lucas S."/>
            <person name="Lapidus A."/>
            <person name="Barry K."/>
            <person name="Detter J.C."/>
            <person name="Glavina del Rio T."/>
            <person name="Hammon N."/>
            <person name="Israni S."/>
            <person name="Pitluck S."/>
            <person name="Brettin T."/>
            <person name="Bruce D."/>
            <person name="Han C."/>
            <person name="Tapia R."/>
            <person name="Gilna P."/>
            <person name="Kiss H."/>
            <person name="Schmutz J."/>
            <person name="Larimer F."/>
            <person name="Land M."/>
            <person name="Kyrpides N."/>
            <person name="Ivanova N."/>
            <person name="Richardson P."/>
        </authorList>
    </citation>
    <scope>NUCLEOTIDE SEQUENCE [LARGE SCALE GENOMIC DNA]</scope>
    <source>
        <strain>ATCC BAA-621 / DSM 15236 / T118</strain>
    </source>
</reference>
<proteinExistence type="inferred from homology"/>